<proteinExistence type="evidence at protein level"/>
<keyword id="KW-0002">3D-structure</keyword>
<keyword id="KW-0009">Actin-binding</keyword>
<keyword id="KW-0025">Alternative splicing</keyword>
<keyword id="KW-0130">Cell adhesion</keyword>
<keyword id="KW-0225">Disease variant</keyword>
<keyword id="KW-0393">Immunoglobulin domain</keyword>
<keyword id="KW-0514">Muscle protein</keyword>
<keyword id="KW-0597">Phosphoprotein</keyword>
<keyword id="KW-1267">Proteomics identification</keyword>
<keyword id="KW-1185">Reference proteome</keyword>
<keyword id="KW-0677">Repeat</keyword>
<keyword id="KW-0787">Thick filament</keyword>
<name>MYPC1_HUMAN</name>
<protein>
    <recommendedName>
        <fullName>Myosin-binding protein C, slow-type</fullName>
        <shortName>Slow MyBP-C</shortName>
    </recommendedName>
    <alternativeName>
        <fullName>C-protein, skeletal muscle slow isoform</fullName>
    </alternativeName>
</protein>
<dbReference type="EMBL" id="X66276">
    <property type="protein sequence ID" value="CAA46987.1"/>
    <property type="molecule type" value="mRNA"/>
</dbReference>
<dbReference type="EMBL" id="X73114">
    <property type="protein sequence ID" value="CAA51545.1"/>
    <property type="molecule type" value="mRNA"/>
</dbReference>
<dbReference type="EMBL" id="AK295727">
    <property type="protein sequence ID" value="BAG58568.1"/>
    <property type="molecule type" value="mRNA"/>
</dbReference>
<dbReference type="EMBL" id="AK296681">
    <property type="protein sequence ID" value="BAG59277.1"/>
    <property type="molecule type" value="mRNA"/>
</dbReference>
<dbReference type="EMBL" id="AK303401">
    <property type="protein sequence ID" value="BAH13954.1"/>
    <property type="molecule type" value="mRNA"/>
</dbReference>
<dbReference type="EMBL" id="AL831993">
    <property type="protein sequence ID" value="CAD89907.1"/>
    <property type="molecule type" value="mRNA"/>
</dbReference>
<dbReference type="EMBL" id="AL832000">
    <property type="protein sequence ID" value="CAD91144.1"/>
    <property type="molecule type" value="mRNA"/>
</dbReference>
<dbReference type="EMBL" id="AL834249">
    <property type="protein sequence ID" value="CAD38925.1"/>
    <property type="molecule type" value="mRNA"/>
</dbReference>
<dbReference type="EMBL" id="AC010205">
    <property type="status" value="NOT_ANNOTATED_CDS"/>
    <property type="molecule type" value="Genomic_DNA"/>
</dbReference>
<dbReference type="EMBL" id="AC090671">
    <property type="status" value="NOT_ANNOTATED_CDS"/>
    <property type="molecule type" value="Genomic_DNA"/>
</dbReference>
<dbReference type="EMBL" id="AC117505">
    <property type="status" value="NOT_ANNOTATED_CDS"/>
    <property type="molecule type" value="Genomic_DNA"/>
</dbReference>
<dbReference type="EMBL" id="CH471054">
    <property type="protein sequence ID" value="EAW97665.1"/>
    <property type="molecule type" value="Genomic_DNA"/>
</dbReference>
<dbReference type="EMBL" id="CH471054">
    <property type="protein sequence ID" value="EAW97669.1"/>
    <property type="molecule type" value="Genomic_DNA"/>
</dbReference>
<dbReference type="EMBL" id="CH471054">
    <property type="protein sequence ID" value="EAW97672.1"/>
    <property type="molecule type" value="Genomic_DNA"/>
</dbReference>
<dbReference type="EMBL" id="BC092418">
    <property type="protein sequence ID" value="AAH92418.1"/>
    <property type="molecule type" value="mRNA"/>
</dbReference>
<dbReference type="EMBL" id="BC117217">
    <property type="protein sequence ID" value="AAI17218.1"/>
    <property type="molecule type" value="mRNA"/>
</dbReference>
<dbReference type="EMBL" id="BC143495">
    <property type="protein sequence ID" value="AAI43496.1"/>
    <property type="molecule type" value="mRNA"/>
</dbReference>
<dbReference type="EMBL" id="BC143502">
    <property type="protein sequence ID" value="AAI43503.1"/>
    <property type="molecule type" value="mRNA"/>
</dbReference>
<dbReference type="EMBL" id="BC143503">
    <property type="protein sequence ID" value="AAI43504.1"/>
    <property type="molecule type" value="mRNA"/>
</dbReference>
<dbReference type="EMBL" id="BC143504">
    <property type="protein sequence ID" value="AAI43505.1"/>
    <property type="molecule type" value="mRNA"/>
</dbReference>
<dbReference type="CCDS" id="CCDS55877.1">
    <molecule id="Q00872-3"/>
</dbReference>
<dbReference type="CCDS" id="CCDS58268.1">
    <molecule id="Q00872-6"/>
</dbReference>
<dbReference type="CCDS" id="CCDS58269.1">
    <molecule id="Q00872-10"/>
</dbReference>
<dbReference type="CCDS" id="CCDS58270.1">
    <molecule id="Q00872-9"/>
</dbReference>
<dbReference type="CCDS" id="CCDS58271.1">
    <molecule id="Q00872-8"/>
</dbReference>
<dbReference type="CCDS" id="CCDS58272.1">
    <molecule id="Q00872-7"/>
</dbReference>
<dbReference type="CCDS" id="CCDS58273.1">
    <molecule id="Q00872-5"/>
</dbReference>
<dbReference type="CCDS" id="CCDS9083.1">
    <molecule id="Q00872-4"/>
</dbReference>
<dbReference type="CCDS" id="CCDS9084.1">
    <molecule id="Q00872-2"/>
</dbReference>
<dbReference type="CCDS" id="CCDS9085.1">
    <molecule id="Q00872-1"/>
</dbReference>
<dbReference type="PIR" id="S24614">
    <property type="entry name" value="S24614"/>
</dbReference>
<dbReference type="PIR" id="S36846">
    <property type="entry name" value="S36846"/>
</dbReference>
<dbReference type="RefSeq" id="NP_001241647.1">
    <molecule id="Q00872-6"/>
    <property type="nucleotide sequence ID" value="NM_001254718.3"/>
</dbReference>
<dbReference type="RefSeq" id="NP_001241648.1">
    <molecule id="Q00872-10"/>
    <property type="nucleotide sequence ID" value="NM_001254719.3"/>
</dbReference>
<dbReference type="RefSeq" id="NP_001241649.1">
    <molecule id="Q00872-8"/>
    <property type="nucleotide sequence ID" value="NM_001254720.3"/>
</dbReference>
<dbReference type="RefSeq" id="NP_001241650.1">
    <molecule id="Q00872-9"/>
    <property type="nucleotide sequence ID" value="NM_001254721.3"/>
</dbReference>
<dbReference type="RefSeq" id="NP_001241651.1">
    <molecule id="Q00872-5"/>
    <property type="nucleotide sequence ID" value="NM_001254722.3"/>
</dbReference>
<dbReference type="RefSeq" id="NP_001241652.1">
    <molecule id="Q00872-7"/>
    <property type="nucleotide sequence ID" value="NM_001254723.3"/>
</dbReference>
<dbReference type="RefSeq" id="NP_002456.2">
    <molecule id="Q00872-4"/>
    <property type="nucleotide sequence ID" value="NM_002465.3"/>
</dbReference>
<dbReference type="RefSeq" id="NP_996555.1">
    <molecule id="Q00872-2"/>
    <property type="nucleotide sequence ID" value="NM_206819.4"/>
</dbReference>
<dbReference type="RefSeq" id="NP_996556.1">
    <molecule id="Q00872-1"/>
    <property type="nucleotide sequence ID" value="NM_206820.4"/>
</dbReference>
<dbReference type="RefSeq" id="NP_996557.1">
    <molecule id="Q00872-3"/>
    <property type="nucleotide sequence ID" value="NM_206821.4"/>
</dbReference>
<dbReference type="PDB" id="1X44">
    <property type="method" value="NMR"/>
    <property type="chains" value="A=342-431"/>
</dbReference>
<dbReference type="PDB" id="2DAV">
    <property type="method" value="NMR"/>
    <property type="chains" value="A=58-170"/>
</dbReference>
<dbReference type="PDB" id="2YUV">
    <property type="method" value="NMR"/>
    <property type="chains" value="A=252-338"/>
</dbReference>
<dbReference type="PDB" id="2YUW">
    <property type="method" value="NMR"/>
    <property type="chains" value="A=718-832"/>
</dbReference>
<dbReference type="PDB" id="2YUX">
    <property type="method" value="NMR"/>
    <property type="chains" value="A=922-1034"/>
</dbReference>
<dbReference type="PDB" id="2YUZ">
    <property type="method" value="NMR"/>
    <property type="chains" value="A=433-519"/>
</dbReference>
<dbReference type="PDB" id="2YXM">
    <property type="method" value="X-ray"/>
    <property type="resolution" value="1.51 A"/>
    <property type="chains" value="A=252-338"/>
</dbReference>
<dbReference type="PDBsum" id="1X44"/>
<dbReference type="PDBsum" id="2DAV"/>
<dbReference type="PDBsum" id="2YUV"/>
<dbReference type="PDBsum" id="2YUW"/>
<dbReference type="PDBsum" id="2YUX"/>
<dbReference type="PDBsum" id="2YUZ"/>
<dbReference type="PDBsum" id="2YXM"/>
<dbReference type="BMRB" id="Q00872"/>
<dbReference type="SMR" id="Q00872"/>
<dbReference type="BioGRID" id="110689">
    <property type="interactions" value="42"/>
</dbReference>
<dbReference type="CORUM" id="Q00872"/>
<dbReference type="FunCoup" id="Q00872">
    <property type="interactions" value="228"/>
</dbReference>
<dbReference type="IntAct" id="Q00872">
    <property type="interactions" value="25"/>
</dbReference>
<dbReference type="STRING" id="9606.ENSP00000400908"/>
<dbReference type="GlyGen" id="Q00872">
    <property type="glycosylation" value="2 sites, 1 O-linked glycan (1 site)"/>
</dbReference>
<dbReference type="iPTMnet" id="Q00872"/>
<dbReference type="PhosphoSitePlus" id="Q00872"/>
<dbReference type="BioMuta" id="MYBPC1"/>
<dbReference type="DMDM" id="6166597"/>
<dbReference type="jPOST" id="Q00872"/>
<dbReference type="MassIVE" id="Q00872"/>
<dbReference type="PaxDb" id="9606-ENSP00000400908"/>
<dbReference type="PeptideAtlas" id="Q00872"/>
<dbReference type="ProteomicsDB" id="18023"/>
<dbReference type="ProteomicsDB" id="18903"/>
<dbReference type="ProteomicsDB" id="33729"/>
<dbReference type="ProteomicsDB" id="57876">
    <molecule id="Q00872-1"/>
</dbReference>
<dbReference type="ProteomicsDB" id="57877">
    <molecule id="Q00872-2"/>
</dbReference>
<dbReference type="ProteomicsDB" id="57878">
    <molecule id="Q00872-3"/>
</dbReference>
<dbReference type="ProteomicsDB" id="61165"/>
<dbReference type="ProteomicsDB" id="7205"/>
<dbReference type="ProteomicsDB" id="7206"/>
<dbReference type="ProteomicsDB" id="7207"/>
<dbReference type="Antibodypedia" id="17936">
    <property type="antibodies" value="300 antibodies from 31 providers"/>
</dbReference>
<dbReference type="DNASU" id="4604"/>
<dbReference type="Ensembl" id="ENST00000361466.7">
    <molecule id="Q00872-4"/>
    <property type="protein sequence ID" value="ENSP00000354849.2"/>
    <property type="gene ID" value="ENSG00000196091.15"/>
</dbReference>
<dbReference type="Ensembl" id="ENST00000361685.6">
    <molecule id="Q00872-2"/>
    <property type="protein sequence ID" value="ENSP00000354845.2"/>
    <property type="gene ID" value="ENSG00000196091.15"/>
</dbReference>
<dbReference type="Ensembl" id="ENST00000392934.7">
    <molecule id="Q00872-7"/>
    <property type="protein sequence ID" value="ENSP00000376665.3"/>
    <property type="gene ID" value="ENSG00000196091.15"/>
</dbReference>
<dbReference type="Ensembl" id="ENST00000452455.6">
    <molecule id="Q00872-6"/>
    <property type="protein sequence ID" value="ENSP00000400908.2"/>
    <property type="gene ID" value="ENSG00000196091.15"/>
</dbReference>
<dbReference type="Ensembl" id="ENST00000536007.5">
    <molecule id="Q00872-9"/>
    <property type="protein sequence ID" value="ENSP00000446128.1"/>
    <property type="gene ID" value="ENSG00000196091.15"/>
</dbReference>
<dbReference type="Ensembl" id="ENST00000541119.5">
    <molecule id="Q00872-8"/>
    <property type="protein sequence ID" value="ENSP00000442847.1"/>
    <property type="gene ID" value="ENSG00000196091.15"/>
</dbReference>
<dbReference type="Ensembl" id="ENST00000545503.6">
    <molecule id="Q00872-10"/>
    <property type="protein sequence ID" value="ENSP00000440034.2"/>
    <property type="gene ID" value="ENSG00000196091.15"/>
</dbReference>
<dbReference type="Ensembl" id="ENST00000547405.5">
    <molecule id="Q00872-5"/>
    <property type="protein sequence ID" value="ENSP00000448175.1"/>
    <property type="gene ID" value="ENSG00000196091.15"/>
</dbReference>
<dbReference type="Ensembl" id="ENST00000550270.1">
    <molecule id="Q00872-1"/>
    <property type="protein sequence ID" value="ENSP00000449702.1"/>
    <property type="gene ID" value="ENSG00000196091.15"/>
</dbReference>
<dbReference type="Ensembl" id="ENST00000553190.5">
    <molecule id="Q00872-3"/>
    <property type="protein sequence ID" value="ENSP00000447900.1"/>
    <property type="gene ID" value="ENSG00000196091.15"/>
</dbReference>
<dbReference type="GeneID" id="4604"/>
<dbReference type="KEGG" id="hsa:4604"/>
<dbReference type="MANE-Select" id="ENST00000361466.7">
    <molecule id="Q00872-4"/>
    <property type="protein sequence ID" value="ENSP00000354849.2"/>
    <property type="RefSeq nucleotide sequence ID" value="NM_002465.4"/>
    <property type="RefSeq protein sequence ID" value="NP_002456.2"/>
</dbReference>
<dbReference type="UCSC" id="uc001tig.4">
    <molecule id="Q00872-1"/>
    <property type="organism name" value="human"/>
</dbReference>
<dbReference type="AGR" id="HGNC:7549"/>
<dbReference type="CTD" id="4604"/>
<dbReference type="DisGeNET" id="4604"/>
<dbReference type="GeneCards" id="MYBPC1"/>
<dbReference type="HGNC" id="HGNC:7549">
    <property type="gene designation" value="MYBPC1"/>
</dbReference>
<dbReference type="HPA" id="ENSG00000196091">
    <property type="expression patterns" value="Group enriched (skeletal muscle, tongue)"/>
</dbReference>
<dbReference type="MalaCards" id="MYBPC1"/>
<dbReference type="MIM" id="160794">
    <property type="type" value="gene"/>
</dbReference>
<dbReference type="MIM" id="614335">
    <property type="type" value="phenotype"/>
</dbReference>
<dbReference type="MIM" id="614915">
    <property type="type" value="phenotype"/>
</dbReference>
<dbReference type="MIM" id="618524">
    <property type="type" value="phenotype"/>
</dbReference>
<dbReference type="neXtProt" id="NX_Q00872"/>
<dbReference type="OpenTargets" id="ENSG00000196091"/>
<dbReference type="Orphanet" id="1146">
    <property type="disease" value="Distal arthrogryposis type 1"/>
</dbReference>
<dbReference type="Orphanet" id="137783">
    <property type="disease" value="Lethal congenital contracture syndrome type 3"/>
</dbReference>
<dbReference type="Orphanet" id="498693">
    <property type="disease" value="MYBPC1-related autosomal recessive non-lethal arthrogryposis multiplex congenita syndrome"/>
</dbReference>
<dbReference type="PharmGKB" id="PA31349"/>
<dbReference type="VEuPathDB" id="HostDB:ENSG00000196091"/>
<dbReference type="eggNOG" id="ENOG502QPYI">
    <property type="taxonomic scope" value="Eukaryota"/>
</dbReference>
<dbReference type="GeneTree" id="ENSGT00940000158254"/>
<dbReference type="InParanoid" id="Q00872"/>
<dbReference type="OMA" id="INNCTMA"/>
<dbReference type="OrthoDB" id="6107607at2759"/>
<dbReference type="PAN-GO" id="Q00872">
    <property type="GO annotations" value="0 GO annotations based on evolutionary models"/>
</dbReference>
<dbReference type="PhylomeDB" id="Q00872"/>
<dbReference type="TreeFam" id="TF351819"/>
<dbReference type="PathwayCommons" id="Q00872"/>
<dbReference type="Reactome" id="R-HSA-390522">
    <property type="pathway name" value="Striated Muscle Contraction"/>
</dbReference>
<dbReference type="SignaLink" id="Q00872"/>
<dbReference type="BioGRID-ORCS" id="4604">
    <property type="hits" value="9 hits in 1144 CRISPR screens"/>
</dbReference>
<dbReference type="ChiTaRS" id="MYBPC1">
    <property type="organism name" value="human"/>
</dbReference>
<dbReference type="EvolutionaryTrace" id="Q00872"/>
<dbReference type="GeneWiki" id="MYBPC1"/>
<dbReference type="GenomeRNAi" id="4604"/>
<dbReference type="Pharos" id="Q00872">
    <property type="development level" value="Tbio"/>
</dbReference>
<dbReference type="PRO" id="PR:Q00872"/>
<dbReference type="Proteomes" id="UP000005640">
    <property type="component" value="Chromosome 12"/>
</dbReference>
<dbReference type="RNAct" id="Q00872">
    <property type="molecule type" value="protein"/>
</dbReference>
<dbReference type="Bgee" id="ENSG00000196091">
    <property type="expression patterns" value="Expressed in skeletal muscle tissue of rectus abdominis and 155 other cell types or tissues"/>
</dbReference>
<dbReference type="ExpressionAtlas" id="Q00872">
    <property type="expression patterns" value="baseline and differential"/>
</dbReference>
<dbReference type="GO" id="GO:0005829">
    <property type="term" value="C:cytosol"/>
    <property type="evidence" value="ECO:0000304"/>
    <property type="project" value="Reactome"/>
</dbReference>
<dbReference type="GO" id="GO:0031430">
    <property type="term" value="C:M band"/>
    <property type="evidence" value="ECO:0000318"/>
    <property type="project" value="GO_Central"/>
</dbReference>
<dbReference type="GO" id="GO:0030016">
    <property type="term" value="C:myofibril"/>
    <property type="evidence" value="ECO:0000250"/>
    <property type="project" value="BHF-UCL"/>
</dbReference>
<dbReference type="GO" id="GO:0032982">
    <property type="term" value="C:myosin filament"/>
    <property type="evidence" value="ECO:0007669"/>
    <property type="project" value="UniProtKB-KW"/>
</dbReference>
<dbReference type="GO" id="GO:0003779">
    <property type="term" value="F:actin binding"/>
    <property type="evidence" value="ECO:0007669"/>
    <property type="project" value="UniProtKB-KW"/>
</dbReference>
<dbReference type="GO" id="GO:0017022">
    <property type="term" value="F:myosin binding"/>
    <property type="evidence" value="ECO:0000314"/>
    <property type="project" value="UniProtKB"/>
</dbReference>
<dbReference type="GO" id="GO:0008307">
    <property type="term" value="F:structural constituent of muscle"/>
    <property type="evidence" value="ECO:0000304"/>
    <property type="project" value="ProtInc"/>
</dbReference>
<dbReference type="GO" id="GO:0031432">
    <property type="term" value="F:titin binding"/>
    <property type="evidence" value="ECO:0000250"/>
    <property type="project" value="BHF-UCL"/>
</dbReference>
<dbReference type="GO" id="GO:0007155">
    <property type="term" value="P:cell adhesion"/>
    <property type="evidence" value="ECO:0007669"/>
    <property type="project" value="UniProtKB-KW"/>
</dbReference>
<dbReference type="GO" id="GO:0045214">
    <property type="term" value="P:sarcomere organization"/>
    <property type="evidence" value="ECO:0000318"/>
    <property type="project" value="GO_Central"/>
</dbReference>
<dbReference type="CDD" id="cd00063">
    <property type="entry name" value="FN3"/>
    <property type="match status" value="3"/>
</dbReference>
<dbReference type="CDD" id="cd00096">
    <property type="entry name" value="Ig"/>
    <property type="match status" value="2"/>
</dbReference>
<dbReference type="CDD" id="cd05894">
    <property type="entry name" value="Ig_C5_MyBP-C"/>
    <property type="match status" value="1"/>
</dbReference>
<dbReference type="FunFam" id="2.60.40.10:FF:000286">
    <property type="entry name" value="Myosin binding protein C, slow type"/>
    <property type="match status" value="1"/>
</dbReference>
<dbReference type="FunFam" id="2.60.40.10:FF:000326">
    <property type="entry name" value="Myosin-binding protein C, cardiac-type"/>
    <property type="match status" value="1"/>
</dbReference>
<dbReference type="FunFam" id="2.60.40.10:FF:000031">
    <property type="entry name" value="Myosin-binding protein C, slow type"/>
    <property type="match status" value="1"/>
</dbReference>
<dbReference type="FunFam" id="2.60.40.10:FF:000060">
    <property type="entry name" value="Myosin-binding protein C, slow type"/>
    <property type="match status" value="1"/>
</dbReference>
<dbReference type="FunFam" id="2.60.40.10:FF:000062">
    <property type="entry name" value="Myosin-binding protein C, slow type"/>
    <property type="match status" value="1"/>
</dbReference>
<dbReference type="FunFam" id="2.60.40.10:FF:000070">
    <property type="entry name" value="Myosin-binding protein C, slow type"/>
    <property type="match status" value="1"/>
</dbReference>
<dbReference type="FunFam" id="2.60.40.10:FF:000081">
    <property type="entry name" value="Myosin-binding protein C, slow type"/>
    <property type="match status" value="1"/>
</dbReference>
<dbReference type="FunFam" id="2.60.40.10:FF:000085">
    <property type="entry name" value="Myosin-binding protein C, slow type"/>
    <property type="match status" value="1"/>
</dbReference>
<dbReference type="FunFam" id="2.60.40.10:FF:000111">
    <property type="entry name" value="Myosin-binding protein C, slow type"/>
    <property type="match status" value="1"/>
</dbReference>
<dbReference type="FunFam" id="2.60.40.10:FF:000249">
    <property type="entry name" value="myosin-binding protein C, slow-type isoform X4"/>
    <property type="match status" value="1"/>
</dbReference>
<dbReference type="Gene3D" id="2.60.40.10">
    <property type="entry name" value="Immunoglobulins"/>
    <property type="match status" value="10"/>
</dbReference>
<dbReference type="InterPro" id="IPR003961">
    <property type="entry name" value="FN3_dom"/>
</dbReference>
<dbReference type="InterPro" id="IPR036116">
    <property type="entry name" value="FN3_sf"/>
</dbReference>
<dbReference type="InterPro" id="IPR007110">
    <property type="entry name" value="Ig-like_dom"/>
</dbReference>
<dbReference type="InterPro" id="IPR036179">
    <property type="entry name" value="Ig-like_dom_sf"/>
</dbReference>
<dbReference type="InterPro" id="IPR013783">
    <property type="entry name" value="Ig-like_fold"/>
</dbReference>
<dbReference type="InterPro" id="IPR013098">
    <property type="entry name" value="Ig_I-set"/>
</dbReference>
<dbReference type="InterPro" id="IPR003599">
    <property type="entry name" value="Ig_sub"/>
</dbReference>
<dbReference type="InterPro" id="IPR003598">
    <property type="entry name" value="Ig_sub2"/>
</dbReference>
<dbReference type="InterPro" id="IPR040849">
    <property type="entry name" value="MyBP-C_THB"/>
</dbReference>
<dbReference type="InterPro" id="IPR050964">
    <property type="entry name" value="Striated_Muscle_Regulatory"/>
</dbReference>
<dbReference type="PANTHER" id="PTHR13817:SF27">
    <property type="entry name" value="MYOSIN-BINDING PROTEIN C, SLOW-TYPE"/>
    <property type="match status" value="1"/>
</dbReference>
<dbReference type="PANTHER" id="PTHR13817">
    <property type="entry name" value="TITIN"/>
    <property type="match status" value="1"/>
</dbReference>
<dbReference type="Pfam" id="PF00041">
    <property type="entry name" value="fn3"/>
    <property type="match status" value="3"/>
</dbReference>
<dbReference type="Pfam" id="PF07679">
    <property type="entry name" value="I-set"/>
    <property type="match status" value="7"/>
</dbReference>
<dbReference type="Pfam" id="PF18362">
    <property type="entry name" value="THB"/>
    <property type="match status" value="1"/>
</dbReference>
<dbReference type="PRINTS" id="PR00014">
    <property type="entry name" value="FNTYPEIII"/>
</dbReference>
<dbReference type="SMART" id="SM00060">
    <property type="entry name" value="FN3"/>
    <property type="match status" value="3"/>
</dbReference>
<dbReference type="SMART" id="SM00409">
    <property type="entry name" value="IG"/>
    <property type="match status" value="7"/>
</dbReference>
<dbReference type="SMART" id="SM00408">
    <property type="entry name" value="IGc2"/>
    <property type="match status" value="4"/>
</dbReference>
<dbReference type="SUPFAM" id="SSF49265">
    <property type="entry name" value="Fibronectin type III"/>
    <property type="match status" value="2"/>
</dbReference>
<dbReference type="SUPFAM" id="SSF48726">
    <property type="entry name" value="Immunoglobulin"/>
    <property type="match status" value="7"/>
</dbReference>
<dbReference type="PROSITE" id="PS50853">
    <property type="entry name" value="FN3"/>
    <property type="match status" value="3"/>
</dbReference>
<dbReference type="PROSITE" id="PS50835">
    <property type="entry name" value="IG_LIKE"/>
    <property type="match status" value="4"/>
</dbReference>
<reference key="1">
    <citation type="journal article" date="1992" name="J. Cell Sci.">
        <title>Mammalian skeletal muscle C-protein: purification from bovine muscle, binding to titin and the characterization of a full-length human cDNA.</title>
        <authorList>
            <person name="Fuerst D.O."/>
            <person name="Vinkemeier U."/>
            <person name="Weber K."/>
        </authorList>
    </citation>
    <scope>NUCLEOTIDE SEQUENCE [MRNA] (ISOFORM 1)</scope>
    <source>
        <tissue>Fetal skeletal muscle</tissue>
    </source>
</reference>
<reference key="2">
    <citation type="journal article" date="1993" name="Eur. J. Biochem.">
        <title>Complete sequence of human fast-type and slow-type muscle myosin-binding-protein C (MyBP-C). Differential expression, conserved domain structure and chromosome assignment.</title>
        <authorList>
            <person name="Weber F.E."/>
            <person name="Vaughan K.T."/>
            <person name="Reinach F.C."/>
            <person name="Fischman D.A."/>
        </authorList>
    </citation>
    <scope>NUCLEOTIDE SEQUENCE [MRNA] (ISOFORM 3)</scope>
    <source>
        <tissue>Fetal skeletal muscle</tissue>
    </source>
</reference>
<reference key="3">
    <citation type="journal article" date="2004" name="Nat. Genet.">
        <title>Complete sequencing and characterization of 21,243 full-length human cDNAs.</title>
        <authorList>
            <person name="Ota T."/>
            <person name="Suzuki Y."/>
            <person name="Nishikawa T."/>
            <person name="Otsuki T."/>
            <person name="Sugiyama T."/>
            <person name="Irie R."/>
            <person name="Wakamatsu A."/>
            <person name="Hayashi K."/>
            <person name="Sato H."/>
            <person name="Nagai K."/>
            <person name="Kimura K."/>
            <person name="Makita H."/>
            <person name="Sekine M."/>
            <person name="Obayashi M."/>
            <person name="Nishi T."/>
            <person name="Shibahara T."/>
            <person name="Tanaka T."/>
            <person name="Ishii S."/>
            <person name="Yamamoto J."/>
            <person name="Saito K."/>
            <person name="Kawai Y."/>
            <person name="Isono Y."/>
            <person name="Nakamura Y."/>
            <person name="Nagahari K."/>
            <person name="Murakami K."/>
            <person name="Yasuda T."/>
            <person name="Iwayanagi T."/>
            <person name="Wagatsuma M."/>
            <person name="Shiratori A."/>
            <person name="Sudo H."/>
            <person name="Hosoiri T."/>
            <person name="Kaku Y."/>
            <person name="Kodaira H."/>
            <person name="Kondo H."/>
            <person name="Sugawara M."/>
            <person name="Takahashi M."/>
            <person name="Kanda K."/>
            <person name="Yokoi T."/>
            <person name="Furuya T."/>
            <person name="Kikkawa E."/>
            <person name="Omura Y."/>
            <person name="Abe K."/>
            <person name="Kamihara K."/>
            <person name="Katsuta N."/>
            <person name="Sato K."/>
            <person name="Tanikawa M."/>
            <person name="Yamazaki M."/>
            <person name="Ninomiya K."/>
            <person name="Ishibashi T."/>
            <person name="Yamashita H."/>
            <person name="Murakawa K."/>
            <person name="Fujimori K."/>
            <person name="Tanai H."/>
            <person name="Kimata M."/>
            <person name="Watanabe M."/>
            <person name="Hiraoka S."/>
            <person name="Chiba Y."/>
            <person name="Ishida S."/>
            <person name="Ono Y."/>
            <person name="Takiguchi S."/>
            <person name="Watanabe S."/>
            <person name="Yosida M."/>
            <person name="Hotuta T."/>
            <person name="Kusano J."/>
            <person name="Kanehori K."/>
            <person name="Takahashi-Fujii A."/>
            <person name="Hara H."/>
            <person name="Tanase T.-O."/>
            <person name="Nomura Y."/>
            <person name="Togiya S."/>
            <person name="Komai F."/>
            <person name="Hara R."/>
            <person name="Takeuchi K."/>
            <person name="Arita M."/>
            <person name="Imose N."/>
            <person name="Musashino K."/>
            <person name="Yuuki H."/>
            <person name="Oshima A."/>
            <person name="Sasaki N."/>
            <person name="Aotsuka S."/>
            <person name="Yoshikawa Y."/>
            <person name="Matsunawa H."/>
            <person name="Ichihara T."/>
            <person name="Shiohata N."/>
            <person name="Sano S."/>
            <person name="Moriya S."/>
            <person name="Momiyama H."/>
            <person name="Satoh N."/>
            <person name="Takami S."/>
            <person name="Terashima Y."/>
            <person name="Suzuki O."/>
            <person name="Nakagawa S."/>
            <person name="Senoh A."/>
            <person name="Mizoguchi H."/>
            <person name="Goto Y."/>
            <person name="Shimizu F."/>
            <person name="Wakebe H."/>
            <person name="Hishigaki H."/>
            <person name="Watanabe T."/>
            <person name="Sugiyama A."/>
            <person name="Takemoto M."/>
            <person name="Kawakami B."/>
            <person name="Yamazaki M."/>
            <person name="Watanabe K."/>
            <person name="Kumagai A."/>
            <person name="Itakura S."/>
            <person name="Fukuzumi Y."/>
            <person name="Fujimori Y."/>
            <person name="Komiyama M."/>
            <person name="Tashiro H."/>
            <person name="Tanigami A."/>
            <person name="Fujiwara T."/>
            <person name="Ono T."/>
            <person name="Yamada K."/>
            <person name="Fujii Y."/>
            <person name="Ozaki K."/>
            <person name="Hirao M."/>
            <person name="Ohmori Y."/>
            <person name="Kawabata A."/>
            <person name="Hikiji T."/>
            <person name="Kobatake N."/>
            <person name="Inagaki H."/>
            <person name="Ikema Y."/>
            <person name="Okamoto S."/>
            <person name="Okitani R."/>
            <person name="Kawakami T."/>
            <person name="Noguchi S."/>
            <person name="Itoh T."/>
            <person name="Shigeta K."/>
            <person name="Senba T."/>
            <person name="Matsumura K."/>
            <person name="Nakajima Y."/>
            <person name="Mizuno T."/>
            <person name="Morinaga M."/>
            <person name="Sasaki M."/>
            <person name="Togashi T."/>
            <person name="Oyama M."/>
            <person name="Hata H."/>
            <person name="Watanabe M."/>
            <person name="Komatsu T."/>
            <person name="Mizushima-Sugano J."/>
            <person name="Satoh T."/>
            <person name="Shirai Y."/>
            <person name="Takahashi Y."/>
            <person name="Nakagawa K."/>
            <person name="Okumura K."/>
            <person name="Nagase T."/>
            <person name="Nomura N."/>
            <person name="Kikuchi H."/>
            <person name="Masuho Y."/>
            <person name="Yamashita R."/>
            <person name="Nakai K."/>
            <person name="Yada T."/>
            <person name="Nakamura Y."/>
            <person name="Ohara O."/>
            <person name="Isogai T."/>
            <person name="Sugano S."/>
        </authorList>
    </citation>
    <scope>NUCLEOTIDE SEQUENCE [LARGE SCALE MRNA] (ISOFORMS 5; 6 AND 7)</scope>
    <source>
        <tissue>Hippocampus</tissue>
        <tissue>Thymus</tissue>
        <tissue>Tongue</tissue>
    </source>
</reference>
<reference key="4">
    <citation type="journal article" date="2007" name="BMC Genomics">
        <title>The full-ORF clone resource of the German cDNA consortium.</title>
        <authorList>
            <person name="Bechtel S."/>
            <person name="Rosenfelder H."/>
            <person name="Duda A."/>
            <person name="Schmidt C.P."/>
            <person name="Ernst U."/>
            <person name="Wellenreuther R."/>
            <person name="Mehrle A."/>
            <person name="Schuster C."/>
            <person name="Bahr A."/>
            <person name="Bloecker H."/>
            <person name="Heubner D."/>
            <person name="Hoerlein A."/>
            <person name="Michel G."/>
            <person name="Wedler H."/>
            <person name="Koehrer K."/>
            <person name="Ottenwaelder B."/>
            <person name="Poustka A."/>
            <person name="Wiemann S."/>
            <person name="Schupp I."/>
        </authorList>
    </citation>
    <scope>NUCLEOTIDE SEQUENCE [LARGE SCALE MRNA] (ISOFORMS 2 AND 4)</scope>
    <source>
        <tissue>Skeletal muscle</tissue>
    </source>
</reference>
<reference key="5">
    <citation type="journal article" date="2006" name="Nature">
        <title>The finished DNA sequence of human chromosome 12.</title>
        <authorList>
            <person name="Scherer S.E."/>
            <person name="Muzny D.M."/>
            <person name="Buhay C.J."/>
            <person name="Chen R."/>
            <person name="Cree A."/>
            <person name="Ding Y."/>
            <person name="Dugan-Rocha S."/>
            <person name="Gill R."/>
            <person name="Gunaratne P."/>
            <person name="Harris R.A."/>
            <person name="Hawes A.C."/>
            <person name="Hernandez J."/>
            <person name="Hodgson A.V."/>
            <person name="Hume J."/>
            <person name="Jackson A."/>
            <person name="Khan Z.M."/>
            <person name="Kovar-Smith C."/>
            <person name="Lewis L.R."/>
            <person name="Lozado R.J."/>
            <person name="Metzker M.L."/>
            <person name="Milosavljevic A."/>
            <person name="Miner G.R."/>
            <person name="Montgomery K.T."/>
            <person name="Morgan M.B."/>
            <person name="Nazareth L.V."/>
            <person name="Scott G."/>
            <person name="Sodergren E."/>
            <person name="Song X.-Z."/>
            <person name="Steffen D."/>
            <person name="Lovering R.C."/>
            <person name="Wheeler D.A."/>
            <person name="Worley K.C."/>
            <person name="Yuan Y."/>
            <person name="Zhang Z."/>
            <person name="Adams C.Q."/>
            <person name="Ansari-Lari M.A."/>
            <person name="Ayele M."/>
            <person name="Brown M.J."/>
            <person name="Chen G."/>
            <person name="Chen Z."/>
            <person name="Clerc-Blankenburg K.P."/>
            <person name="Davis C."/>
            <person name="Delgado O."/>
            <person name="Dinh H.H."/>
            <person name="Draper H."/>
            <person name="Gonzalez-Garay M.L."/>
            <person name="Havlak P."/>
            <person name="Jackson L.R."/>
            <person name="Jacob L.S."/>
            <person name="Kelly S.H."/>
            <person name="Li L."/>
            <person name="Li Z."/>
            <person name="Liu J."/>
            <person name="Liu W."/>
            <person name="Lu J."/>
            <person name="Maheshwari M."/>
            <person name="Nguyen B.-V."/>
            <person name="Okwuonu G.O."/>
            <person name="Pasternak S."/>
            <person name="Perez L.M."/>
            <person name="Plopper F.J.H."/>
            <person name="Santibanez J."/>
            <person name="Shen H."/>
            <person name="Tabor P.E."/>
            <person name="Verduzco D."/>
            <person name="Waldron L."/>
            <person name="Wang Q."/>
            <person name="Williams G.A."/>
            <person name="Zhang J."/>
            <person name="Zhou J."/>
            <person name="Allen C.C."/>
            <person name="Amin A.G."/>
            <person name="Anyalebechi V."/>
            <person name="Bailey M."/>
            <person name="Barbaria J.A."/>
            <person name="Bimage K.E."/>
            <person name="Bryant N.P."/>
            <person name="Burch P.E."/>
            <person name="Burkett C.E."/>
            <person name="Burrell K.L."/>
            <person name="Calderon E."/>
            <person name="Cardenas V."/>
            <person name="Carter K."/>
            <person name="Casias K."/>
            <person name="Cavazos I."/>
            <person name="Cavazos S.R."/>
            <person name="Ceasar H."/>
            <person name="Chacko J."/>
            <person name="Chan S.N."/>
            <person name="Chavez D."/>
            <person name="Christopoulos C."/>
            <person name="Chu J."/>
            <person name="Cockrell R."/>
            <person name="Cox C.D."/>
            <person name="Dang M."/>
            <person name="Dathorne S.R."/>
            <person name="David R."/>
            <person name="Davis C.M."/>
            <person name="Davy-Carroll L."/>
            <person name="Deshazo D.R."/>
            <person name="Donlin J.E."/>
            <person name="D'Souza L."/>
            <person name="Eaves K.A."/>
            <person name="Egan A."/>
            <person name="Emery-Cohen A.J."/>
            <person name="Escotto M."/>
            <person name="Flagg N."/>
            <person name="Forbes L.D."/>
            <person name="Gabisi A.M."/>
            <person name="Garza M."/>
            <person name="Hamilton C."/>
            <person name="Henderson N."/>
            <person name="Hernandez O."/>
            <person name="Hines S."/>
            <person name="Hogues M.E."/>
            <person name="Huang M."/>
            <person name="Idlebird D.G."/>
            <person name="Johnson R."/>
            <person name="Jolivet A."/>
            <person name="Jones S."/>
            <person name="Kagan R."/>
            <person name="King L.M."/>
            <person name="Leal B."/>
            <person name="Lebow H."/>
            <person name="Lee S."/>
            <person name="LeVan J.M."/>
            <person name="Lewis L.C."/>
            <person name="London P."/>
            <person name="Lorensuhewa L.M."/>
            <person name="Loulseged H."/>
            <person name="Lovett D.A."/>
            <person name="Lucier A."/>
            <person name="Lucier R.L."/>
            <person name="Ma J."/>
            <person name="Madu R.C."/>
            <person name="Mapua P."/>
            <person name="Martindale A.D."/>
            <person name="Martinez E."/>
            <person name="Massey E."/>
            <person name="Mawhiney S."/>
            <person name="Meador M.G."/>
            <person name="Mendez S."/>
            <person name="Mercado C."/>
            <person name="Mercado I.C."/>
            <person name="Merritt C.E."/>
            <person name="Miner Z.L."/>
            <person name="Minja E."/>
            <person name="Mitchell T."/>
            <person name="Mohabbat F."/>
            <person name="Mohabbat K."/>
            <person name="Montgomery B."/>
            <person name="Moore N."/>
            <person name="Morris S."/>
            <person name="Munidasa M."/>
            <person name="Ngo R.N."/>
            <person name="Nguyen N.B."/>
            <person name="Nickerson E."/>
            <person name="Nwaokelemeh O.O."/>
            <person name="Nwokenkwo S."/>
            <person name="Obregon M."/>
            <person name="Oguh M."/>
            <person name="Oragunye N."/>
            <person name="Oviedo R.J."/>
            <person name="Parish B.J."/>
            <person name="Parker D.N."/>
            <person name="Parrish J."/>
            <person name="Parks K.L."/>
            <person name="Paul H.A."/>
            <person name="Payton B.A."/>
            <person name="Perez A."/>
            <person name="Perrin W."/>
            <person name="Pickens A."/>
            <person name="Primus E.L."/>
            <person name="Pu L.-L."/>
            <person name="Puazo M."/>
            <person name="Quiles M.M."/>
            <person name="Quiroz J.B."/>
            <person name="Rabata D."/>
            <person name="Reeves K."/>
            <person name="Ruiz S.J."/>
            <person name="Shao H."/>
            <person name="Sisson I."/>
            <person name="Sonaike T."/>
            <person name="Sorelle R.P."/>
            <person name="Sutton A.E."/>
            <person name="Svatek A.F."/>
            <person name="Svetz L.A."/>
            <person name="Tamerisa K.S."/>
            <person name="Taylor T.R."/>
            <person name="Teague B."/>
            <person name="Thomas N."/>
            <person name="Thorn R.D."/>
            <person name="Trejos Z.Y."/>
            <person name="Trevino B.K."/>
            <person name="Ukegbu O.N."/>
            <person name="Urban J.B."/>
            <person name="Vasquez L.I."/>
            <person name="Vera V.A."/>
            <person name="Villasana D.M."/>
            <person name="Wang L."/>
            <person name="Ward-Moore S."/>
            <person name="Warren J.T."/>
            <person name="Wei X."/>
            <person name="White F."/>
            <person name="Williamson A.L."/>
            <person name="Wleczyk R."/>
            <person name="Wooden H.S."/>
            <person name="Wooden S.H."/>
            <person name="Yen J."/>
            <person name="Yoon L."/>
            <person name="Yoon V."/>
            <person name="Zorrilla S.E."/>
            <person name="Nelson D."/>
            <person name="Kucherlapati R."/>
            <person name="Weinstock G."/>
            <person name="Gibbs R.A."/>
        </authorList>
    </citation>
    <scope>NUCLEOTIDE SEQUENCE [LARGE SCALE GENOMIC DNA]</scope>
</reference>
<reference key="6">
    <citation type="submission" date="2005-09" db="EMBL/GenBank/DDBJ databases">
        <authorList>
            <person name="Mural R.J."/>
            <person name="Istrail S."/>
            <person name="Sutton G.G."/>
            <person name="Florea L."/>
            <person name="Halpern A.L."/>
            <person name="Mobarry C.M."/>
            <person name="Lippert R."/>
            <person name="Walenz B."/>
            <person name="Shatkay H."/>
            <person name="Dew I."/>
            <person name="Miller J.R."/>
            <person name="Flanigan M.J."/>
            <person name="Edwards N.J."/>
            <person name="Bolanos R."/>
            <person name="Fasulo D."/>
            <person name="Halldorsson B.V."/>
            <person name="Hannenhalli S."/>
            <person name="Turner R."/>
            <person name="Yooseph S."/>
            <person name="Lu F."/>
            <person name="Nusskern D.R."/>
            <person name="Shue B.C."/>
            <person name="Zheng X.H."/>
            <person name="Zhong F."/>
            <person name="Delcher A.L."/>
            <person name="Huson D.H."/>
            <person name="Kravitz S.A."/>
            <person name="Mouchard L."/>
            <person name="Reinert K."/>
            <person name="Remington K.A."/>
            <person name="Clark A.G."/>
            <person name="Waterman M.S."/>
            <person name="Eichler E.E."/>
            <person name="Adams M.D."/>
            <person name="Hunkapiller M.W."/>
            <person name="Myers E.W."/>
            <person name="Venter J.C."/>
        </authorList>
    </citation>
    <scope>NUCLEOTIDE SEQUENCE [LARGE SCALE GENOMIC DNA]</scope>
</reference>
<reference key="7">
    <citation type="journal article" date="2004" name="Genome Res.">
        <title>The status, quality, and expansion of the NIH full-length cDNA project: the Mammalian Gene Collection (MGC).</title>
        <authorList>
            <consortium name="The MGC Project Team"/>
        </authorList>
    </citation>
    <scope>NUCLEOTIDE SEQUENCE [LARGE SCALE MRNA] (ISOFORMS 3; 5; 6; 8; 9 AND 10)</scope>
    <source>
        <tissue>Brain</tissue>
        <tissue>Pancreas</tissue>
    </source>
</reference>
<reference key="8">
    <citation type="journal article" date="2006" name="Cell. Mol. Life Sci.">
        <title>The ubiquitin-specific protease USP25 interacts with three sarcomeric proteins.</title>
        <authorList>
            <person name="Bosch-Comas A."/>
            <person name="Lindsten K."/>
            <person name="Gonzalez-Duarte R."/>
            <person name="Masucci M.G."/>
            <person name="Marfany G."/>
        </authorList>
    </citation>
    <scope>INTERACTION WITH USP25</scope>
</reference>
<reference key="9">
    <citation type="journal article" date="2012" name="Hum. Mutat.">
        <title>Autosomal recessive lethal congenital contractural syndrome type 4 (LCCS4) caused by a mutation in MYBPC1.</title>
        <authorList>
            <person name="Markus B."/>
            <person name="Narkis G."/>
            <person name="Landau D."/>
            <person name="Birk R.Z."/>
            <person name="Cohen I."/>
            <person name="Birk O.S."/>
        </authorList>
    </citation>
    <scope>INVOLVEMENT IN LCCS4</scope>
</reference>
<reference key="10">
    <citation type="submission" date="2006-06" db="PDB data bank">
        <title>Solution structure of the first and third Ig-like domain of myosin-binding protein C, slow-type.</title>
        <authorList>
            <consortium name="RIKEN structural genomics initiative (RSGI)"/>
        </authorList>
    </citation>
    <scope>STRUCTURE BY NMR OF 58-170 AND 342-431</scope>
</reference>
<reference key="11">
    <citation type="journal article" date="2010" name="Hum. Mol. Genet.">
        <title>Myosin binding protein C1: a novel gene for autosomal dominant distal arthrogryposis type 1.</title>
        <authorList>
            <person name="Gurnett C.A."/>
            <person name="Desruisseau D.M."/>
            <person name="McCall K."/>
            <person name="Choi R."/>
            <person name="Meyer Z.I."/>
            <person name="Talerico M."/>
            <person name="Miller S.E."/>
            <person name="Ju J.S."/>
            <person name="Pestronk A."/>
            <person name="Connolly A.M."/>
            <person name="Druley T.E."/>
            <person name="Weihl C.C."/>
            <person name="Dobbs M.B."/>
        </authorList>
    </citation>
    <scope>VARIANTS DA1B ARG-211 AND HIS-849</scope>
</reference>
<reference key="12">
    <citation type="journal article" date="2016" name="Clin. Genet.">
        <title>Expanding the MYBPC1 phenotypic spectrum: a novel homozygous mutation causes arthrogryposis multiplex congenita.</title>
        <authorList>
            <person name="Ekhilevitch N."/>
            <person name="Kurolap A."/>
            <person name="Oz-Levi D."/>
            <person name="Mory A."/>
            <person name="Hershkovitz T."/>
            <person name="Ast G."/>
            <person name="Mandel H."/>
            <person name="Baris H.N."/>
        </authorList>
    </citation>
    <scope>VARIANT DA1B LYS-161</scope>
</reference>
<reference key="13">
    <citation type="journal article" date="2019" name="Hum. Mutat.">
        <title>Heterozygous variants in MYBPC1 are associated with an expanded neuromuscular phenotype beyond arthrogryposis.</title>
        <authorList>
            <consortium name="Undiagnosed Diseases Network"/>
            <person name="Shashi V."/>
            <person name="Geist J."/>
            <person name="Lee Y."/>
            <person name="Yoo Y."/>
            <person name="Shin U."/>
            <person name="Schoch K."/>
            <person name="Sullivan J."/>
            <person name="Stong N."/>
            <person name="Smith E."/>
            <person name="Jasien J."/>
            <person name="Kranz P."/>
            <person name="Lee Y."/>
            <person name="Shin Y.B."/>
            <person name="Wright N.T."/>
            <person name="Choi M."/>
            <person name="Kontrogianni-Konstantopoulos A."/>
        </authorList>
    </citation>
    <scope>INVOLVEMENT IN CMYO16</scope>
    <scope>VARIANTS CMYO16 PRO-234 AND ARG-238</scope>
    <scope>CHARACTERIZATION OF VARIANTS CMYO16 PRO-234 AND ARG-238</scope>
</reference>
<reference key="14">
    <citation type="journal article" date="2019" name="Ann. Neurol.">
        <title>Novel mutations in MYBPC1 are associated with myogenic tremor and mild myopathy.</title>
        <authorList>
            <person name="Stavusis J."/>
            <person name="Lace B."/>
            <person name="Schaefer J."/>
            <person name="Geist J."/>
            <person name="Inashkina I."/>
            <person name="Kidere D."/>
            <person name="Pajusalu S."/>
            <person name="Wright N.T."/>
            <person name="Saak A."/>
            <person name="Weinhold M."/>
            <person name="Haubenberger D."/>
            <person name="Jackson S."/>
            <person name="Kontrogianni-Konstantopoulos A."/>
            <person name="Boennemann C.G."/>
        </authorList>
    </citation>
    <scope>INVOLVEMENT IN CMYO16</scope>
    <scope>VARIANTS CMYO16 HIS-222 AND LYS-223</scope>
    <scope>CHARACTERIZATION OF VARIANTS CMYO16 HIS-222 AND LYS-223</scope>
</reference>
<sequence>MPEPTKKEENEVPAPAPPPEEPSKEKEAGTTPAKDWTLVETPPGEEQAKQNANSQLSILFIEKPQGGTVKVGEDITFIAKVKAEDLLRKPTIKWFKGKWMDLASKAGKHLQLKETFERHSRVYTFEMQIIKAKDNFAGNYRCEVTYKDKFDSCSFDLEVHESTGTTPNIDIRSAFKRSGEGQEDAGELDFSGLLKRREVKQQEEEPQVDVWELLKNAKPSEYEKIAFQYGITDLRGMLKRLKRMRREEKKSAAFAKILDPAYQVDKGGRVRFVVELADPKLEVKWYKNGQEIRPSTKYIFEHKGCQRILFINNCQMTDDSEYYVTAGDEKCSTELFVREPPIMVTKQLEDTTAYCGERVELECEVSEDDANVKWFKNGEEIIPGPKSRYRIRVEGKKHILIIEGATKADAAEYSVMTTGGQSSAKLSVDLKPLKILTPLTDQTVNLGKEICLKCEISENIPGKWTKNGLPVQESDRLKVVHKGRIHKLVIANALTEDEGDYVFAPDAYNVTLPAKVHVIDPPKIILDGLDADNTVTVIAGNKLRLEIPISGEPPPKAMWSRGDKAIMEGSGRIRTESYPDSSTLVIDIAERDDSGVYHINLKNEAGEAHASIKVKVVDFPDPPVAPTVTEVGDDWCIMNWEPPAYDGGSPILGYFIERKKKQSSRWMRLNFDLCKETTFEPKKMIEGVAYEVRIFAVNAIGISKPSMPSRPFVPLAVTSPPTLLTVDSVTDTTVTMRWRPPDHIGAAGLDGYVLEYCFEGSTSAKQSDENGEAAYDLPAEDWIVANKDLIDKTKFTITGLPTDAKIFVRVKAVNAAGASEPKYYSQPILVKEIIEPPKIRIPRHLKQTYIRRVGEAVNLVIPFQGKPRPELTWKKDGAEIDKNQINIRNSETDTIIFIRKAERSHSGKYDLQVKVDKFVETASIDIQIIDRPGPPQIVKIEDVWGENVALTWTPPKDDGNAAITGYTIQKADKKSMEWFTVIEHYHRTSATITELVIGNEYYFRVFSENMCGLSEDATMTKESAVIARDGKIYKNPVYEDFDFSEAPMFTQPLVNTYAIAGYNATLNCSVRGNPKPKITWMKNKVAIVDDPRYRMFSNQGVCTLEIRKPSPYDGGTYCCKAVNDLGTVEIECKLEVKVIAQ</sequence>
<comment type="function">
    <text evidence="8 9">Thick filament-associated protein located in the crossbridge region of vertebrate striated muscle a bands. Slow skeletal protein that binds to both myosin and actin (PubMed:31025394, PubMed:31264822). In vitro, binds to native thin filaments and modifies the activity of actin-activated myosin ATPase. May modulate muscle contraction or may play a more structural role.</text>
</comment>
<comment type="subunit">
    <text evidence="4">Interacts with USP25 (isoform USP25m only); the interaction prevents proteasomal degradation of MYBPC1.</text>
</comment>
<comment type="interaction">
    <interactant intactId="EBI-5652924">
        <id>Q00872</id>
    </interactant>
    <interactant intactId="EBI-2799016">
        <id>O75923</id>
        <label>DYSF</label>
    </interactant>
    <organismsDiffer>false</organismsDiffer>
    <experiments>4</experiments>
</comment>
<comment type="interaction">
    <interactant intactId="EBI-5652924">
        <id>Q00872</id>
    </interactant>
    <interactant intactId="EBI-5653200">
        <id>Q14324</id>
        <label>MYBPC2</label>
    </interactant>
    <organismsDiffer>false</organismsDiffer>
    <experiments>3</experiments>
</comment>
<comment type="alternative products">
    <event type="alternative splicing"/>
    <isoform>
        <id>Q00872-1</id>
        <name>1</name>
        <sequence type="displayed"/>
    </isoform>
    <isoform>
        <id>Q00872-2</id>
        <name>2</name>
        <sequence type="described" ref="VSP_039105 VSP_039106"/>
    </isoform>
    <isoform>
        <id>Q00872-3</id>
        <name>3</name>
        <sequence type="described" ref="VSP_039106"/>
    </isoform>
    <isoform>
        <id>Q00872-4</id>
        <name>4</name>
        <sequence type="described" ref="VSP_039105 VSP_039106 VSP_045241"/>
    </isoform>
    <isoform>
        <id>Q00872-5</id>
        <name>5</name>
        <sequence type="described" ref="VSP_046736 VSP_039106 VSP_045241"/>
    </isoform>
    <isoform>
        <id>Q00872-6</id>
        <name>6</name>
        <sequence type="described" ref="VSP_046740"/>
    </isoform>
    <isoform>
        <id>Q00872-7</id>
        <name>7</name>
        <sequence type="described" ref="VSP_046737 VSP_039106 VSP_046739"/>
    </isoform>
    <isoform>
        <id>Q00872-8</id>
        <name>8</name>
        <sequence type="described" ref="VSP_046735 VSP_039106 VSP_045241"/>
    </isoform>
    <isoform>
        <id>Q00872-9</id>
        <name>9</name>
        <sequence type="described" ref="VSP_046738 VSP_039106 VSP_045241"/>
    </isoform>
    <isoform>
        <id>Q00872-10</id>
        <name>10</name>
        <sequence type="described" ref="VSP_039106 VSP_045241"/>
    </isoform>
</comment>
<comment type="disease" evidence="5 7">
    <disease id="DI-03302">
        <name>Arthrogryposis, distal, 1B</name>
        <acronym>DA1B</acronym>
        <description>A form of distal arthrogryposis, a disease characterized by congenital joint contractures that mainly involve two or more distal parts of the limbs, in the absence of a primary neurological or muscle disease. Distal arthrogryposis type 1 is characterized largely by camptodactyly and clubfoot. Hypoplasia and/or absence of some interphalangeal creases is common. The shoulders and hips are less frequently affected.</description>
        <dbReference type="MIM" id="614335"/>
    </disease>
    <text>The disease is caused by variants affecting the gene represented in this entry.</text>
</comment>
<comment type="disease" evidence="6">
    <disease id="DI-03609">
        <name>Lethal congenital contracture syndrome 4</name>
        <acronym>LCCS4</acronym>
        <description>A form of lethal congenital contracture syndrome, an autosomal recessive disorder characterized by degeneration of anterior horn neurons, extreme skeletal muscle atrophy and congenital non-progressive joint contractures. The contractures can involve the upper or lower limbs and/or the vertebral column, leading to various degrees of flexion or extension limitations evident at birth.</description>
        <dbReference type="MIM" id="614915"/>
    </disease>
    <text>The disease is caused by variants affecting the gene represented in this entry.</text>
</comment>
<comment type="disease" evidence="8 9">
    <disease id="DI-05629">
        <name>Congenital myopathy 16</name>
        <acronym>CMYO16</acronym>
        <description>An autosomal dominant muscular disorder characterized by muscle weakness, hypotonia associated with high-frequency postural tremor of the limbs, mildly delayed walking, and steppage gait. Additional features include skeletal deformities such as scoliosis, thoracic asymmetry and spinal rigidity. Some patients show mild facial dysmorphic features. Cognitive functions are normal.</description>
        <dbReference type="MIM" id="618524"/>
    </disease>
    <text>The disease is caused by variants affecting the gene represented in this entry.</text>
</comment>
<comment type="similarity">
    <text evidence="14">Belongs to the immunoglobulin superfamily. MyBP family.</text>
</comment>
<accession>Q00872</accession>
<accession>B4DKR5</accession>
<accession>B7Z8G8</accession>
<accession>B7ZL02</accession>
<accession>B7ZL09</accession>
<accession>B7ZL10</accession>
<accession>E7ESM5</accession>
<accession>E7EWS6</accession>
<accession>G3XAE8</accession>
<accession>Q15497</accession>
<accession>Q17RR7</accession>
<accession>Q569K7</accession>
<accession>Q86T48</accession>
<accession>Q86TC8</accession>
<accession>Q8N3L2</accession>
<feature type="chain" id="PRO_0000072689" description="Myosin-binding protein C, slow-type">
    <location>
        <begin position="1"/>
        <end position="1141"/>
    </location>
</feature>
<feature type="domain" description="Ig-like C2-type 1">
    <location>
        <begin position="72"/>
        <end position="144"/>
    </location>
</feature>
<feature type="domain" description="Ig-like C2-type 2">
    <location>
        <begin position="251"/>
        <end position="340"/>
    </location>
</feature>
<feature type="domain" description="Ig-like C2-type 3">
    <location>
        <begin position="341"/>
        <end position="431"/>
    </location>
</feature>
<feature type="domain" description="Ig-like C2-type 4">
    <location>
        <begin position="432"/>
        <end position="520"/>
    </location>
</feature>
<feature type="domain" description="Ig-like C2-type 5">
    <location>
        <begin position="522"/>
        <end position="619"/>
    </location>
</feature>
<feature type="domain" description="Fibronectin type-III 1" evidence="2">
    <location>
        <begin position="622"/>
        <end position="721"/>
    </location>
</feature>
<feature type="domain" description="Fibronectin type-III 2" evidence="2">
    <location>
        <begin position="722"/>
        <end position="833"/>
    </location>
</feature>
<feature type="domain" description="Ig-like C2-type 6">
    <location>
        <begin position="837"/>
        <end position="931"/>
    </location>
</feature>
<feature type="domain" description="Fibronectin type-III 3" evidence="2">
    <location>
        <begin position="934"/>
        <end position="1029"/>
    </location>
</feature>
<feature type="domain" description="Ig-like C2-type 7">
    <location>
        <begin position="1047"/>
        <end position="1141"/>
    </location>
</feature>
<feature type="region of interest" description="Disordered" evidence="3">
    <location>
        <begin position="1"/>
        <end position="51"/>
    </location>
</feature>
<feature type="compositionally biased region" description="Basic and acidic residues" evidence="3">
    <location>
        <begin position="1"/>
        <end position="10"/>
    </location>
</feature>
<feature type="modified residue" description="Phosphothreonine" evidence="1">
    <location>
        <position position="406"/>
    </location>
</feature>
<feature type="modified residue" description="Phosphoserine" evidence="1">
    <location>
        <position position="611"/>
    </location>
</feature>
<feature type="modified residue" description="Phosphothreonine" evidence="1">
    <location>
        <position position="798"/>
    </location>
</feature>
<feature type="modified residue" description="Phosphotyrosine" evidence="1">
    <location>
        <position position="823"/>
    </location>
</feature>
<feature type="splice variant" id="VSP_046735" description="In isoform 8." evidence="11">
    <location>
        <begin position="8"/>
        <end position="19"/>
    </location>
</feature>
<feature type="splice variant" id="VSP_046736" description="In isoform 5." evidence="10 11">
    <location>
        <begin position="9"/>
        <end position="34"/>
    </location>
</feature>
<feature type="splice variant" id="VSP_046737" description="In isoform 7." evidence="10">
    <original>ENEVPAPAPPPEEPSKEKEAGTTPAK</original>
    <variation>DEEEVSPPSALPP</variation>
    <location>
        <begin position="9"/>
        <end position="34"/>
    </location>
</feature>
<feature type="splice variant" id="VSP_039105" description="In isoform 2 and isoform 4." evidence="12">
    <original>K</original>
    <variation>KDEEEVSPPSALPPGLGSRALERKDS</variation>
    <location>
        <position position="34"/>
    </location>
</feature>
<feature type="splice variant" id="VSP_046738" description="In isoform 9." evidence="11">
    <location>
        <begin position="176"/>
        <end position="194"/>
    </location>
</feature>
<feature type="splice variant" id="VSP_039106" description="In isoform 2, isoform 3, isoform 4, isoform 5, isoform 7, isoform 8, isoform 9 and isoform 10." evidence="10 11 12 13">
    <original>STSAKQSDENGEAAYDLPA</original>
    <variation>T</variation>
    <location>
        <begin position="761"/>
        <end position="779"/>
    </location>
</feature>
<feature type="splice variant" id="VSP_046739" description="In isoform 7." evidence="10">
    <original>VIAQ</original>
    <variation>GGLSFCRLLLQGVPPNIIDSYLRDLHSSNPEEY</variation>
    <location>
        <begin position="1138"/>
        <end position="1141"/>
    </location>
</feature>
<feature type="splice variant" id="VSP_045241" description="In isoform 4, isoform 5, isoform 8, isoform 9 and isoform 10." evidence="10 11 12">
    <original>AQ</original>
    <variation>YQGVNTPGQPVFLEGQQQSLHNKDF</variation>
    <location>
        <begin position="1140"/>
        <end position="1141"/>
    </location>
</feature>
<feature type="splice variant" id="VSP_046740" description="In isoform 6." evidence="10 11">
    <original>AQ</original>
    <variation>YQGVNTPGQPVFLEGQQQVGSPSADSSCKAYLQT</variation>
    <location>
        <begin position="1140"/>
        <end position="1141"/>
    </location>
</feature>
<feature type="sequence variant" id="VAR_075219" description="In DA1B; may affect splicing; dbSNP:rs1370563966." evidence="7">
    <original>E</original>
    <variation>K</variation>
    <location>
        <position position="161"/>
    </location>
</feature>
<feature type="sequence variant" id="VAR_067045" description="In DA1B; dbSNP:rs387906657." evidence="5">
    <original>W</original>
    <variation>R</variation>
    <location>
        <position position="211"/>
    </location>
</feature>
<feature type="sequence variant" id="VAR_083207" description="In CMYO16; changes in electrostatic interactions resulting in increased myosin binding; no effect on actin binding; dbSNP:rs1593846841." evidence="8">
    <original>Y</original>
    <variation>H</variation>
    <location>
        <position position="222"/>
    </location>
</feature>
<feature type="sequence variant" id="VAR_083208" description="In CMYO16; changes in electrostatic interactions resulting in increased myosin binding; no effect on actin binding; dbSNP:rs564856283." evidence="8">
    <original>E</original>
    <variation>K</variation>
    <location>
        <position position="223"/>
    </location>
</feature>
<feature type="sequence variant" id="VAR_083209" description="In CMYO16; no effects on myosin or actin binding; reduced helicity of certain domains; dbSNP:rs1421405659." evidence="9">
    <original>L</original>
    <variation>P</variation>
    <location>
        <position position="234"/>
    </location>
</feature>
<feature type="sequence variant" id="VAR_083210" description="In CMYO16; decreased binding to myosin; no effect on actin binding; dbSNP:rs1565943228." evidence="9">
    <original>L</original>
    <variation>R</variation>
    <location>
        <position position="238"/>
    </location>
</feature>
<feature type="sequence variant" id="VAR_021923" description="In dbSNP:rs3817552.">
    <original>H</original>
    <variation>Q</variation>
    <location>
        <position position="481"/>
    </location>
</feature>
<feature type="sequence variant" id="VAR_067046" description="In DA1B; dbSNP:rs387906658." evidence="5">
    <original>Y</original>
    <variation>H</variation>
    <location>
        <position position="849"/>
    </location>
</feature>
<feature type="sequence conflict" description="In Ref. 1; CAA46987." evidence="14" ref="1">
    <original>LR</original>
    <variation>SE</variation>
    <location>
        <begin position="87"/>
        <end position="88"/>
    </location>
</feature>
<feature type="sequence conflict" description="In Ref. 1; CAA46987." evidence="14" ref="1">
    <original>KWFKG</original>
    <variation>NGSR</variation>
    <location>
        <begin position="93"/>
        <end position="97"/>
    </location>
</feature>
<feature type="sequence conflict" description="In Ref. 3; BAG59277." evidence="14" ref="3">
    <original>Y</original>
    <variation>H</variation>
    <location>
        <position position="146"/>
    </location>
</feature>
<feature type="sequence conflict" description="In Ref. 1; CAA46987." evidence="14" ref="1">
    <original>A</original>
    <variation>T</variation>
    <location>
        <position position="217"/>
    </location>
</feature>
<feature type="sequence conflict" description="In Ref. 1; CAA46987." evidence="14" ref="1">
    <original>GITDLR</original>
    <variation>ESPTCS</variation>
    <location>
        <begin position="230"/>
        <end position="235"/>
    </location>
</feature>
<feature type="sequence conflict" description="In Ref. 1; CAA46987." evidence="14" ref="1">
    <original>MR</original>
    <variation>SI</variation>
    <location>
        <begin position="244"/>
        <end position="245"/>
    </location>
</feature>
<feature type="sequence conflict" description="In Ref. 1; CAA46987." evidence="14" ref="1">
    <original>A</original>
    <variation>V</variation>
    <location>
        <position position="261"/>
    </location>
</feature>
<feature type="sequence conflict" description="In Ref. 1; CAA46987." evidence="14" ref="1">
    <original>Y</original>
    <variation>N</variation>
    <location>
        <position position="286"/>
    </location>
</feature>
<feature type="sequence conflict" description="In Ref. 1; CAA46987." evidence="14" ref="1">
    <original>I</original>
    <variation>L</variation>
    <location>
        <position position="292"/>
    </location>
</feature>
<feature type="sequence conflict" description="In Ref. 1; CAA46987." evidence="14" ref="1">
    <original>HKGCQRILFIN</original>
    <variation>DTRCQSILNID</variation>
    <location>
        <begin position="302"/>
        <end position="312"/>
    </location>
</feature>
<feature type="sequence conflict" description="In Ref. 1; CAA46987." evidence="14" ref="1">
    <original>F</original>
    <variation>L</variation>
    <location>
        <position position="336"/>
    </location>
</feature>
<feature type="sequence conflict" description="In Ref. 1; CAA46987." evidence="14" ref="1">
    <original>A</original>
    <variation>D</variation>
    <location>
        <position position="353"/>
    </location>
</feature>
<feature type="sequence conflict" description="In Ref. 1; CAA46987." evidence="14" ref="1">
    <original>N</original>
    <variation>Q</variation>
    <location>
        <position position="371"/>
    </location>
</feature>
<feature type="sequence conflict" description="In Ref. 1; CAA46987." evidence="14" ref="1">
    <original>PGPKS</original>
    <variation>LVQT</variation>
    <location>
        <begin position="383"/>
        <end position="387"/>
    </location>
</feature>
<feature type="sequence conflict" description="In Ref. 1; CAA46987." evidence="14" ref="1">
    <original>E</original>
    <variation>D</variation>
    <location>
        <position position="412"/>
    </location>
</feature>
<feature type="sequence conflict" description="In Ref. 4; CAD91144." evidence="14" ref="4">
    <original>Q</original>
    <variation>L</variation>
    <location>
        <position position="421"/>
    </location>
</feature>
<feature type="sequence conflict" description="In Ref. 1; CAA46987." evidence="14" ref="1">
    <original>AN</original>
    <variation>DH</variation>
    <location>
        <begin position="491"/>
        <end position="492"/>
    </location>
</feature>
<feature type="sequence conflict" description="In Ref. 4; CAD89907." evidence="14" ref="4">
    <original>Y</original>
    <variation>C</variation>
    <location>
        <position position="752"/>
    </location>
</feature>
<feature type="sequence conflict" description="In Ref. 4; CAD38925." evidence="14" ref="4">
    <original>Y</original>
    <variation>H</variation>
    <location>
        <position position="752"/>
    </location>
</feature>
<feature type="sequence conflict" description="In Ref. 1; CAA46987." evidence="14" ref="1">
    <original>RIPR</original>
    <variation>HSPK</variation>
    <location>
        <begin position="840"/>
        <end position="843"/>
    </location>
</feature>
<feature type="sequence conflict" description="In Ref. 1; CAA46987." evidence="14" ref="1">
    <original>EAVN</original>
    <variation>DRVI</variation>
    <location>
        <begin position="855"/>
        <end position="858"/>
    </location>
</feature>
<feature type="sequence conflict" description="In Ref. 3; BAH13954." evidence="14" ref="3">
    <original>D</original>
    <variation>G</variation>
    <location>
        <position position="925"/>
    </location>
</feature>
<feature type="sequence conflict" description="In Ref. 1; CAA46987." evidence="14" ref="1">
    <original>Q</original>
    <variation>R</variation>
    <location>
        <position position="927"/>
    </location>
</feature>
<feature type="sequence conflict" description="In Ref. 1; CAA46987." evidence="14" ref="1">
    <original>E</original>
    <variation>R</variation>
    <location>
        <position position="946"/>
    </location>
</feature>
<feature type="sequence conflict" description="In Ref. 1; CAA46987." evidence="14" ref="1">
    <original>FT</original>
    <variation>LR</variation>
    <location>
        <begin position="979"/>
        <end position="980"/>
    </location>
</feature>
<feature type="sequence conflict" description="In Ref. 1; CAA46987." evidence="14" ref="1">
    <original>YHRTSATI</original>
    <variation>IIEPVPH</variation>
    <location>
        <begin position="985"/>
        <end position="992"/>
    </location>
</feature>
<feature type="sequence conflict" description="In Ref. 1; CAA46987." evidence="14" ref="1">
    <original>TYAIAGYN</original>
    <variation>RLCHSGYM</variation>
    <location>
        <begin position="1056"/>
        <end position="1063"/>
    </location>
</feature>
<feature type="sequence conflict" description="In Ref. 1; CAA46987." evidence="14" ref="1">
    <original>Q</original>
    <variation>L</variation>
    <location>
        <position position="1099"/>
    </location>
</feature>
<feature type="sequence conflict" description="In Ref. 1; CAA46987." evidence="14" ref="1">
    <original>R</original>
    <variation>G</variation>
    <location>
        <position position="1107"/>
    </location>
</feature>
<feature type="strand" evidence="16">
    <location>
        <begin position="68"/>
        <end position="70"/>
    </location>
</feature>
<feature type="strand" evidence="16">
    <location>
        <begin position="75"/>
        <end position="82"/>
    </location>
</feature>
<feature type="strand" evidence="16">
    <location>
        <begin position="86"/>
        <end position="88"/>
    </location>
</feature>
<feature type="strand" evidence="16">
    <location>
        <begin position="91"/>
        <end position="99"/>
    </location>
</feature>
<feature type="helix" evidence="16">
    <location>
        <begin position="102"/>
        <end position="105"/>
    </location>
</feature>
<feature type="strand" evidence="16">
    <location>
        <begin position="107"/>
        <end position="117"/>
    </location>
</feature>
<feature type="turn" evidence="16">
    <location>
        <begin position="118"/>
        <end position="121"/>
    </location>
</feature>
<feature type="strand" evidence="16">
    <location>
        <begin position="122"/>
        <end position="129"/>
    </location>
</feature>
<feature type="strand" evidence="16">
    <location>
        <begin position="138"/>
        <end position="145"/>
    </location>
</feature>
<feature type="strand" evidence="16">
    <location>
        <begin position="150"/>
        <end position="153"/>
    </location>
</feature>
<feature type="strand" evidence="16">
    <location>
        <begin position="156"/>
        <end position="160"/>
    </location>
</feature>
<feature type="strand" evidence="20">
    <location>
        <begin position="254"/>
        <end position="256"/>
    </location>
</feature>
<feature type="strand" evidence="20">
    <location>
        <begin position="260"/>
        <end position="265"/>
    </location>
</feature>
<feature type="strand" evidence="20">
    <location>
        <begin position="270"/>
        <end position="278"/>
    </location>
</feature>
<feature type="strand" evidence="20">
    <location>
        <begin position="283"/>
        <end position="287"/>
    </location>
</feature>
<feature type="strand" evidence="20">
    <location>
        <begin position="294"/>
        <end position="303"/>
    </location>
</feature>
<feature type="strand" evidence="20">
    <location>
        <begin position="306"/>
        <end position="311"/>
    </location>
</feature>
<feature type="helix" evidence="20">
    <location>
        <begin position="316"/>
        <end position="318"/>
    </location>
</feature>
<feature type="strand" evidence="20">
    <location>
        <begin position="320"/>
        <end position="326"/>
    </location>
</feature>
<feature type="strand" evidence="20">
    <location>
        <begin position="329"/>
        <end position="338"/>
    </location>
</feature>
<feature type="strand" evidence="15">
    <location>
        <begin position="351"/>
        <end position="354"/>
    </location>
</feature>
<feature type="strand" evidence="15">
    <location>
        <begin position="357"/>
        <end position="364"/>
    </location>
</feature>
<feature type="strand" evidence="15">
    <location>
        <begin position="366"/>
        <end position="369"/>
    </location>
</feature>
<feature type="strand" evidence="15">
    <location>
        <begin position="373"/>
        <end position="376"/>
    </location>
</feature>
<feature type="strand" evidence="15">
    <location>
        <begin position="388"/>
        <end position="394"/>
    </location>
</feature>
<feature type="strand" evidence="15">
    <location>
        <begin position="397"/>
        <end position="405"/>
    </location>
</feature>
<feature type="turn" evidence="15">
    <location>
        <begin position="407"/>
        <end position="409"/>
    </location>
</feature>
<feature type="strand" evidence="15">
    <location>
        <begin position="411"/>
        <end position="417"/>
    </location>
</feature>
<feature type="strand" evidence="15">
    <location>
        <begin position="420"/>
        <end position="429"/>
    </location>
</feature>
<feature type="strand" evidence="19">
    <location>
        <begin position="442"/>
        <end position="445"/>
    </location>
</feature>
<feature type="strand" evidence="19">
    <location>
        <begin position="452"/>
        <end position="455"/>
    </location>
</feature>
<feature type="strand" evidence="19">
    <location>
        <begin position="462"/>
        <end position="466"/>
    </location>
</feature>
<feature type="strand" evidence="19">
    <location>
        <begin position="475"/>
        <end position="481"/>
    </location>
</feature>
<feature type="strand" evidence="19">
    <location>
        <begin position="483"/>
        <end position="492"/>
    </location>
</feature>
<feature type="helix" evidence="19">
    <location>
        <begin position="495"/>
        <end position="497"/>
    </location>
</feature>
<feature type="strand" evidence="19">
    <location>
        <begin position="499"/>
        <end position="508"/>
    </location>
</feature>
<feature type="strand" evidence="19">
    <location>
        <begin position="512"/>
        <end position="519"/>
    </location>
</feature>
<feature type="strand" evidence="17">
    <location>
        <begin position="722"/>
        <end position="729"/>
    </location>
</feature>
<feature type="strand" evidence="17">
    <location>
        <begin position="734"/>
        <end position="739"/>
    </location>
</feature>
<feature type="strand" evidence="17">
    <location>
        <begin position="749"/>
        <end position="758"/>
    </location>
</feature>
<feature type="strand" evidence="17">
    <location>
        <begin position="780"/>
        <end position="784"/>
    </location>
</feature>
<feature type="strand" evidence="17">
    <location>
        <begin position="792"/>
        <end position="797"/>
    </location>
</feature>
<feature type="strand" evidence="17">
    <location>
        <begin position="805"/>
        <end position="814"/>
    </location>
</feature>
<feature type="strand" evidence="18">
    <location>
        <begin position="938"/>
        <end position="944"/>
    </location>
</feature>
<feature type="strand" evidence="18">
    <location>
        <begin position="947"/>
        <end position="952"/>
    </location>
</feature>
<feature type="strand" evidence="18">
    <location>
        <begin position="968"/>
        <end position="972"/>
    </location>
</feature>
<feature type="turn" evidence="18">
    <location>
        <begin position="973"/>
        <end position="975"/>
    </location>
</feature>
<feature type="strand" evidence="18">
    <location>
        <begin position="979"/>
        <end position="984"/>
    </location>
</feature>
<feature type="strand" evidence="18">
    <location>
        <begin position="997"/>
        <end position="1005"/>
    </location>
</feature>
<feature type="strand" evidence="18">
    <location>
        <begin position="1009"/>
        <end position="1011"/>
    </location>
</feature>
<feature type="strand" evidence="18">
    <location>
        <begin position="1024"/>
        <end position="1026"/>
    </location>
</feature>
<gene>
    <name type="primary">MYBPC1</name>
    <name type="synonym">MYBPCS</name>
</gene>
<organism>
    <name type="scientific">Homo sapiens</name>
    <name type="common">Human</name>
    <dbReference type="NCBI Taxonomy" id="9606"/>
    <lineage>
        <taxon>Eukaryota</taxon>
        <taxon>Metazoa</taxon>
        <taxon>Chordata</taxon>
        <taxon>Craniata</taxon>
        <taxon>Vertebrata</taxon>
        <taxon>Euteleostomi</taxon>
        <taxon>Mammalia</taxon>
        <taxon>Eutheria</taxon>
        <taxon>Euarchontoglires</taxon>
        <taxon>Primates</taxon>
        <taxon>Haplorrhini</taxon>
        <taxon>Catarrhini</taxon>
        <taxon>Hominidae</taxon>
        <taxon>Homo</taxon>
    </lineage>
</organism>
<evidence type="ECO:0000250" key="1">
    <source>
        <dbReference type="UniProtKB" id="Q63518"/>
    </source>
</evidence>
<evidence type="ECO:0000255" key="2">
    <source>
        <dbReference type="PROSITE-ProRule" id="PRU00316"/>
    </source>
</evidence>
<evidence type="ECO:0000256" key="3">
    <source>
        <dbReference type="SAM" id="MobiDB-lite"/>
    </source>
</evidence>
<evidence type="ECO:0000269" key="4">
    <source>
    </source>
</evidence>
<evidence type="ECO:0000269" key="5">
    <source>
    </source>
</evidence>
<evidence type="ECO:0000269" key="6">
    <source>
    </source>
</evidence>
<evidence type="ECO:0000269" key="7">
    <source>
    </source>
</evidence>
<evidence type="ECO:0000269" key="8">
    <source>
    </source>
</evidence>
<evidence type="ECO:0000269" key="9">
    <source>
    </source>
</evidence>
<evidence type="ECO:0000303" key="10">
    <source>
    </source>
</evidence>
<evidence type="ECO:0000303" key="11">
    <source>
    </source>
</evidence>
<evidence type="ECO:0000303" key="12">
    <source>
    </source>
</evidence>
<evidence type="ECO:0000303" key="13">
    <source>
    </source>
</evidence>
<evidence type="ECO:0000305" key="14"/>
<evidence type="ECO:0007829" key="15">
    <source>
        <dbReference type="PDB" id="1X44"/>
    </source>
</evidence>
<evidence type="ECO:0007829" key="16">
    <source>
        <dbReference type="PDB" id="2DAV"/>
    </source>
</evidence>
<evidence type="ECO:0007829" key="17">
    <source>
        <dbReference type="PDB" id="2YUW"/>
    </source>
</evidence>
<evidence type="ECO:0007829" key="18">
    <source>
        <dbReference type="PDB" id="2YUX"/>
    </source>
</evidence>
<evidence type="ECO:0007829" key="19">
    <source>
        <dbReference type="PDB" id="2YUZ"/>
    </source>
</evidence>
<evidence type="ECO:0007829" key="20">
    <source>
        <dbReference type="PDB" id="2YXM"/>
    </source>
</evidence>